<proteinExistence type="inferred from homology"/>
<feature type="chain" id="PRO_0000196227" description="Leukotoxin">
    <location>
        <begin position="1"/>
        <end position="953"/>
    </location>
</feature>
<feature type="transmembrane region" description="Helical" evidence="2">
    <location>
        <begin position="229"/>
        <end position="249"/>
    </location>
</feature>
<feature type="transmembrane region" description="Helical" evidence="2">
    <location>
        <begin position="297"/>
        <end position="317"/>
    </location>
</feature>
<feature type="transmembrane region" description="Helical" evidence="2">
    <location>
        <begin position="359"/>
        <end position="379"/>
    </location>
</feature>
<feature type="transmembrane region" description="Helical" evidence="2">
    <location>
        <begin position="381"/>
        <end position="401"/>
    </location>
</feature>
<feature type="repeat" description="Hemolysin-type calcium-binding 1">
    <location>
        <begin position="715"/>
        <end position="732"/>
    </location>
</feature>
<feature type="repeat" description="Hemolysin-type calcium-binding 2">
    <location>
        <begin position="733"/>
        <end position="750"/>
    </location>
</feature>
<feature type="repeat" description="Hemolysin-type calcium-binding 3">
    <location>
        <begin position="751"/>
        <end position="768"/>
    </location>
</feature>
<feature type="repeat" description="Hemolysin-type calcium-binding 4">
    <location>
        <begin position="769"/>
        <end position="786"/>
    </location>
</feature>
<feature type="repeat" description="Hemolysin-type calcium-binding 5">
    <location>
        <begin position="789"/>
        <end position="806"/>
    </location>
</feature>
<dbReference type="EMBL" id="AF314504">
    <property type="protein sequence ID" value="AAG40288.1"/>
    <property type="molecule type" value="Genomic_DNA"/>
</dbReference>
<dbReference type="RefSeq" id="WP_015484526.1">
    <property type="nucleotide sequence ID" value="NZ_JAZDUL010000001.1"/>
</dbReference>
<dbReference type="SMR" id="P0C084"/>
<dbReference type="GO" id="GO:0005576">
    <property type="term" value="C:extracellular region"/>
    <property type="evidence" value="ECO:0007669"/>
    <property type="project" value="UniProtKB-SubCell"/>
</dbReference>
<dbReference type="GO" id="GO:0020002">
    <property type="term" value="C:host cell plasma membrane"/>
    <property type="evidence" value="ECO:0007669"/>
    <property type="project" value="UniProtKB-SubCell"/>
</dbReference>
<dbReference type="GO" id="GO:0016020">
    <property type="term" value="C:membrane"/>
    <property type="evidence" value="ECO:0007669"/>
    <property type="project" value="UniProtKB-KW"/>
</dbReference>
<dbReference type="GO" id="GO:0005509">
    <property type="term" value="F:calcium ion binding"/>
    <property type="evidence" value="ECO:0007669"/>
    <property type="project" value="InterPro"/>
</dbReference>
<dbReference type="GO" id="GO:0015267">
    <property type="term" value="F:channel activity"/>
    <property type="evidence" value="ECO:0007669"/>
    <property type="project" value="InterPro"/>
</dbReference>
<dbReference type="GO" id="GO:0090729">
    <property type="term" value="F:toxin activity"/>
    <property type="evidence" value="ECO:0007669"/>
    <property type="project" value="UniProtKB-KW"/>
</dbReference>
<dbReference type="GO" id="GO:0031640">
    <property type="term" value="P:killing of cells of another organism"/>
    <property type="evidence" value="ECO:0007669"/>
    <property type="project" value="UniProtKB-KW"/>
</dbReference>
<dbReference type="FunFam" id="2.150.10.10:FF:000002">
    <property type="entry name" value="Leukotoxin"/>
    <property type="match status" value="1"/>
</dbReference>
<dbReference type="Gene3D" id="2.150.10.10">
    <property type="entry name" value="Serralysin-like metalloprotease, C-terminal"/>
    <property type="match status" value="1"/>
</dbReference>
<dbReference type="InterPro" id="IPR018511">
    <property type="entry name" value="Hemolysin-typ_Ca-bd_CS"/>
</dbReference>
<dbReference type="InterPro" id="IPR001343">
    <property type="entry name" value="Hemolysn_Ca-bd"/>
</dbReference>
<dbReference type="InterPro" id="IPR013550">
    <property type="entry name" value="RTX_C"/>
</dbReference>
<dbReference type="InterPro" id="IPR018504">
    <property type="entry name" value="RTX_pore_form"/>
</dbReference>
<dbReference type="InterPro" id="IPR050557">
    <property type="entry name" value="RTX_toxin/Mannuronan_C5-epim"/>
</dbReference>
<dbReference type="InterPro" id="IPR003995">
    <property type="entry name" value="RTX_toxin_determinant-A"/>
</dbReference>
<dbReference type="InterPro" id="IPR011049">
    <property type="entry name" value="Serralysin-like_metalloprot_C"/>
</dbReference>
<dbReference type="NCBIfam" id="NF033943">
    <property type="entry name" value="RTX_toxin"/>
    <property type="match status" value="1"/>
</dbReference>
<dbReference type="PANTHER" id="PTHR38340">
    <property type="entry name" value="S-LAYER PROTEIN"/>
    <property type="match status" value="1"/>
</dbReference>
<dbReference type="PANTHER" id="PTHR38340:SF1">
    <property type="entry name" value="S-LAYER PROTEIN"/>
    <property type="match status" value="1"/>
</dbReference>
<dbReference type="Pfam" id="PF00353">
    <property type="entry name" value="HemolysinCabind"/>
    <property type="match status" value="3"/>
</dbReference>
<dbReference type="Pfam" id="PF02382">
    <property type="entry name" value="RTX"/>
    <property type="match status" value="1"/>
</dbReference>
<dbReference type="Pfam" id="PF08339">
    <property type="entry name" value="RTX_C"/>
    <property type="match status" value="1"/>
</dbReference>
<dbReference type="PRINTS" id="PR00313">
    <property type="entry name" value="CABNDNGRPT"/>
</dbReference>
<dbReference type="PRINTS" id="PR01488">
    <property type="entry name" value="RTXTOXINA"/>
</dbReference>
<dbReference type="SUPFAM" id="SSF51120">
    <property type="entry name" value="beta-Roll"/>
    <property type="match status" value="1"/>
</dbReference>
<dbReference type="PROSITE" id="PS00330">
    <property type="entry name" value="HEMOLYSIN_CALCIUM"/>
    <property type="match status" value="4"/>
</dbReference>
<keyword id="KW-0106">Calcium</keyword>
<keyword id="KW-0204">Cytolysis</keyword>
<keyword id="KW-0354">Hemolysis</keyword>
<keyword id="KW-1032">Host cell membrane</keyword>
<keyword id="KW-1043">Host membrane</keyword>
<keyword id="KW-0449">Lipoprotein</keyword>
<keyword id="KW-0472">Membrane</keyword>
<keyword id="KW-0677">Repeat</keyword>
<keyword id="KW-0964">Secreted</keyword>
<keyword id="KW-0800">Toxin</keyword>
<keyword id="KW-0812">Transmembrane</keyword>
<keyword id="KW-1133">Transmembrane helix</keyword>
<keyword id="KW-0843">Virulence</keyword>
<accession>P0C084</accession>
<accession>Q9ETG5</accession>
<gene>
    <name type="primary">lktA</name>
</gene>
<sequence length="953" mass="101998">MGTRLTTLSNGLKNTLTATKSGLHKAGQSLTQAGSSLKTGAKKIILYIPQNYQYDTEQGNGLQDLVKAAEELGIEVQREERNNIATAQTSLGTIQTAIGLTERGIVLSAPQIDKLLQKTKAGQALGSAESIVQNANKAKTVLSGIQSILGSVLAGMDLDEALQNNSNQHALAKAGLELTNSLIENIANSVKTLDEFGEQISQFGSKLQNIKGLGTLGDKLKNIGGLDKAGLGLDVISGLLSGATAALVLADKNASTAKKVGAGFELANQVVGNITKAVSSYILAQRVAAGLSSTGPVAALIASTVSLAISPLAFAGIADKFNHAKSLESYAERFKKLGYDGDNLLAEYQRGTGTIDASVTAINTALAAIAGGVSAAAAGSVIASPIALLVSGITGVISTILQYSKQAMFEHVANKIHNKIVEWEKNNHGKNYFENGYDARYLANLQDNMKFLLNLNKELQAERVIAITQQQWDNNIGDLAGISRLGEKVLSGKAYVDAFEEGKHIKADKLVQLDSANGIIDVSNSGKAKTQHILFRTPLLTPGTEHRERVQTGKYEYITKLNINRVDSWKITDGAASSTFDLTNVVQRIGIELDNAGNVTKTKETKIIAKLGEGDDNVFVGSGTTEIDGGEGYDRVHYSRGNYGALTIDATKETEQGSYTVNRFVETGKALHEVTSTHTALVGNREEKIEYRHSNNQHHAGYYTKDTLKAVEEIIGTSHNDIFKGSKFNDAFNGGDGVDTIDGNDGNDRLFGGKGDDILDGGNGDDFIDGGKGNDLLHGGKGDDIFVHRKGDGNDIITDSDGNDKLSFSDSNLKDLTFEKVKHNLVITNSKKEKVTIQDWFREADFAKEVPNYKATKDEKIEEIIGQNGERITSKQVDDLIAKGNGKITQDELSKVVDNYELLKHSKNVTNSLDKLISSVSAFTSSNDSRNVLVAPTSMLDQSLSSLQFARAA</sequence>
<reference key="1">
    <citation type="journal article" date="2001" name="J. Bacteriol.">
        <title>Sequence diversity and molecular evolution of the leukotoxin (lktA) gene in bovine and ovine strains of Mannheimia (Pasteurella) haemolytica.</title>
        <authorList>
            <person name="Davies R.L."/>
            <person name="Whittam T.S."/>
            <person name="Selander R.K."/>
        </authorList>
    </citation>
    <scope>NUCLEOTIDE SEQUENCE [GENOMIC DNA]</scope>
    <source>
        <strain>Serotype A7 / PH388</strain>
    </source>
</reference>
<organism>
    <name type="scientific">Mannheimia haemolytica</name>
    <name type="common">Pasteurella haemolytica</name>
    <dbReference type="NCBI Taxonomy" id="75985"/>
    <lineage>
        <taxon>Bacteria</taxon>
        <taxon>Pseudomonadati</taxon>
        <taxon>Pseudomonadota</taxon>
        <taxon>Gammaproteobacteria</taxon>
        <taxon>Pasteurellales</taxon>
        <taxon>Pasteurellaceae</taxon>
        <taxon>Mannheimia</taxon>
    </lineage>
</organism>
<protein>
    <recommendedName>
        <fullName>Leukotoxin</fullName>
        <shortName>Lkt</shortName>
    </recommendedName>
</protein>
<name>LKA7A_MANHA</name>
<evidence type="ECO:0000250" key="1"/>
<evidence type="ECO:0000255" key="2"/>
<evidence type="ECO:0000305" key="3"/>
<comment type="function">
    <text evidence="1">Pasteurella leukotoxins are exotoxins that attack host leukocytes and especially polymorphonuclear cells, by causing cell rupture. The leukotoxin binds to the host LFA-1 integrin and induces a signaling cascade leading to many biological effects, including tyrosine phosphorylation of the CD18 tail, elevation of the intracellular Ca(2+) and lysis of the host cell (By similarity). This leukotoxin is a major contributor to the pathogenesis of lung injury in ovine pneumonic pasteurellosis. It also has weak hemolytic activity.</text>
</comment>
<comment type="subcellular location">
    <subcellularLocation>
        <location evidence="1">Secreted</location>
    </subcellularLocation>
    <subcellularLocation>
        <location evidence="1">Host cell membrane</location>
        <topology evidence="1">Multi-pass membrane protein</topology>
    </subcellularLocation>
</comment>
<comment type="domain">
    <text evidence="1">The transmembrane domains are believed to be involved in pore formation in target cells.</text>
</comment>
<comment type="domain">
    <text evidence="1">The Gly-rich region is probably involved in calcium binding, which is required for target cell-binding and cytolytic activity.</text>
</comment>
<comment type="domain">
    <text evidence="1">The C-terminal domain contains an export signal that is recognized by the ABC transporter complex LktBD.</text>
</comment>
<comment type="PTM">
    <text evidence="1">Acylated by LktC. The toxin only becomes active when modified (By similarity).</text>
</comment>
<comment type="miscellaneous">
    <text>The lktCABD operon has a complex mosaic structure that has been derived by extensive inter- and intraspecies horizontal DNA transfer and intragenic recombination events.</text>
</comment>
<comment type="similarity">
    <text evidence="3">Belongs to the RTX prokaryotic toxin (TC 1.C.11) family.</text>
</comment>